<keyword id="KW-0249">Electron transport</keyword>
<keyword id="KW-0472">Membrane</keyword>
<keyword id="KW-0496">Mitochondrion</keyword>
<keyword id="KW-0999">Mitochondrion inner membrane</keyword>
<keyword id="KW-0520">NAD</keyword>
<keyword id="KW-0679">Respiratory chain</keyword>
<keyword id="KW-1278">Translocase</keyword>
<keyword id="KW-0812">Transmembrane</keyword>
<keyword id="KW-1133">Transmembrane helix</keyword>
<keyword id="KW-0813">Transport</keyword>
<keyword id="KW-0830">Ubiquinone</keyword>
<protein>
    <recommendedName>
        <fullName>NADH-ubiquinone oxidoreductase chain 6</fullName>
        <ecNumber evidence="1">7.1.1.2</ecNumber>
    </recommendedName>
    <alternativeName>
        <fullName>NADH dehydrogenase subunit 6</fullName>
    </alternativeName>
</protein>
<geneLocation type="mitochondrion"/>
<dbReference type="EC" id="7.1.1.2" evidence="1"/>
<dbReference type="EMBL" id="X72004">
    <property type="protein sequence ID" value="CAA50888.1"/>
    <property type="molecule type" value="Genomic_DNA"/>
</dbReference>
<dbReference type="PIR" id="S41846">
    <property type="entry name" value="S41846"/>
</dbReference>
<dbReference type="RefSeq" id="NP_007080.1">
    <property type="nucleotide sequence ID" value="NC_001602.1"/>
</dbReference>
<dbReference type="SMR" id="P38603"/>
<dbReference type="GeneID" id="807750"/>
<dbReference type="CTD" id="4541"/>
<dbReference type="GO" id="GO:0005743">
    <property type="term" value="C:mitochondrial inner membrane"/>
    <property type="evidence" value="ECO:0000250"/>
    <property type="project" value="UniProtKB"/>
</dbReference>
<dbReference type="GO" id="GO:0008137">
    <property type="term" value="F:NADH dehydrogenase (ubiquinone) activity"/>
    <property type="evidence" value="ECO:0000250"/>
    <property type="project" value="UniProtKB"/>
</dbReference>
<dbReference type="GO" id="GO:0006120">
    <property type="term" value="P:mitochondrial electron transport, NADH to ubiquinone"/>
    <property type="evidence" value="ECO:0000250"/>
    <property type="project" value="UniProtKB"/>
</dbReference>
<dbReference type="GO" id="GO:0032981">
    <property type="term" value="P:mitochondrial respiratory chain complex I assembly"/>
    <property type="evidence" value="ECO:0000250"/>
    <property type="project" value="UniProtKB"/>
</dbReference>
<dbReference type="Gene3D" id="1.20.120.1200">
    <property type="entry name" value="NADH-ubiquinone/plastoquinone oxidoreductase chain 6, subunit NuoJ"/>
    <property type="match status" value="1"/>
</dbReference>
<dbReference type="InterPro" id="IPR050269">
    <property type="entry name" value="ComplexI_Subunit6"/>
</dbReference>
<dbReference type="InterPro" id="IPR001457">
    <property type="entry name" value="NADH_UbQ/plastoQ_OxRdtase_su6"/>
</dbReference>
<dbReference type="InterPro" id="IPR042106">
    <property type="entry name" value="Nuo/plastoQ_OxRdtase_6_NuoJ"/>
</dbReference>
<dbReference type="PANTHER" id="PTHR11435">
    <property type="entry name" value="NADH UBIQUINONE OXIDOREDUCTASE SUBUNIT ND6"/>
    <property type="match status" value="1"/>
</dbReference>
<dbReference type="PANTHER" id="PTHR11435:SF1">
    <property type="entry name" value="NADH-UBIQUINONE OXIDOREDUCTASE CHAIN 6"/>
    <property type="match status" value="1"/>
</dbReference>
<dbReference type="Pfam" id="PF00499">
    <property type="entry name" value="Oxidored_q3"/>
    <property type="match status" value="1"/>
</dbReference>
<comment type="function">
    <text evidence="1">Core subunit of the mitochondrial membrane respiratory chain NADH dehydrogenase (Complex I) which catalyzes electron transfer from NADH through the respiratory chain, using ubiquinone as an electron acceptor. Essential for the catalytic activity and assembly of complex I.</text>
</comment>
<comment type="catalytic activity">
    <reaction evidence="1">
        <text>a ubiquinone + NADH + 5 H(+)(in) = a ubiquinol + NAD(+) + 4 H(+)(out)</text>
        <dbReference type="Rhea" id="RHEA:29091"/>
        <dbReference type="Rhea" id="RHEA-COMP:9565"/>
        <dbReference type="Rhea" id="RHEA-COMP:9566"/>
        <dbReference type="ChEBI" id="CHEBI:15378"/>
        <dbReference type="ChEBI" id="CHEBI:16389"/>
        <dbReference type="ChEBI" id="CHEBI:17976"/>
        <dbReference type="ChEBI" id="CHEBI:57540"/>
        <dbReference type="ChEBI" id="CHEBI:57945"/>
        <dbReference type="EC" id="7.1.1.2"/>
    </reaction>
</comment>
<comment type="subunit">
    <text evidence="2">Core subunit of respiratory chain NADH dehydrogenase (Complex I) which is composed of 45 different subunits.</text>
</comment>
<comment type="subcellular location">
    <subcellularLocation>
        <location evidence="2">Mitochondrion inner membrane</location>
        <topology evidence="3">Multi-pass membrane protein</topology>
    </subcellularLocation>
</comment>
<comment type="similarity">
    <text evidence="4">Belongs to the complex I subunit 6 family.</text>
</comment>
<organism>
    <name type="scientific">Halichoerus grypus</name>
    <name type="common">Gray seal</name>
    <name type="synonym">Phoca grypus</name>
    <dbReference type="NCBI Taxonomy" id="9711"/>
    <lineage>
        <taxon>Eukaryota</taxon>
        <taxon>Metazoa</taxon>
        <taxon>Chordata</taxon>
        <taxon>Craniata</taxon>
        <taxon>Vertebrata</taxon>
        <taxon>Euteleostomi</taxon>
        <taxon>Mammalia</taxon>
        <taxon>Eutheria</taxon>
        <taxon>Laurasiatheria</taxon>
        <taxon>Carnivora</taxon>
        <taxon>Caniformia</taxon>
        <taxon>Pinnipedia</taxon>
        <taxon>Phocidae</taxon>
        <taxon>Phocinae</taxon>
        <taxon>Halichoerus</taxon>
    </lineage>
</organism>
<accession>P38603</accession>
<feature type="chain" id="PRO_0000118287" description="NADH-ubiquinone oxidoreductase chain 6">
    <location>
        <begin position="1"/>
        <end position="175"/>
    </location>
</feature>
<feature type="transmembrane region" description="Helical" evidence="3">
    <location>
        <begin position="1"/>
        <end position="21"/>
    </location>
</feature>
<feature type="transmembrane region" description="Helical" evidence="3">
    <location>
        <begin position="25"/>
        <end position="45"/>
    </location>
</feature>
<feature type="transmembrane region" description="Helical" evidence="3">
    <location>
        <begin position="47"/>
        <end position="67"/>
    </location>
</feature>
<feature type="transmembrane region" description="Helical" evidence="3">
    <location>
        <begin position="88"/>
        <end position="108"/>
    </location>
</feature>
<feature type="transmembrane region" description="Helical" evidence="3">
    <location>
        <begin position="149"/>
        <end position="169"/>
    </location>
</feature>
<evidence type="ECO:0000250" key="1">
    <source>
        <dbReference type="UniProtKB" id="P03923"/>
    </source>
</evidence>
<evidence type="ECO:0000250" key="2">
    <source>
        <dbReference type="UniProtKB" id="P03924"/>
    </source>
</evidence>
<evidence type="ECO:0000255" key="3"/>
<evidence type="ECO:0000305" key="4"/>
<proteinExistence type="inferred from homology"/>
<sequence length="175" mass="18911">MMTYIVFILSIIFVISFVGFSSKPSPIYGGLVLIISGAVGCGIVLSFGGSFLGLMVFLIYLGGMLVVFGYTTAMATEQYPEVWVSNKAVLGAFVMGLLSELLLACYILKDDEVDAVFEFNGMGDWVIYDTGDSGFFSEEAMGIAALYSYGTWLVIVTGWSLFIGVLVIMEVTRGN</sequence>
<gene>
    <name type="primary">MT-ND6</name>
    <name type="synonym">MTND6</name>
    <name type="synonym">NADH6</name>
    <name type="synonym">ND6</name>
</gene>
<name>NU6M_HALGR</name>
<reference key="1">
    <citation type="journal article" date="1993" name="J. Mol. Evol.">
        <title>The nucleotide sequence of the mitochondrial DNA molecule of the grey seal, Halichoerus grypus, and a comparison with mitochondrial sequences of other true seals.</title>
        <authorList>
            <person name="Arnason U."/>
            <person name="Gullberg A."/>
            <person name="Johnsson E."/>
            <person name="Ledje C."/>
        </authorList>
    </citation>
    <scope>NUCLEOTIDE SEQUENCE [GENOMIC DNA]</scope>
</reference>